<protein>
    <recommendedName>
        <fullName evidence="1">UDP-N-acetylglucosamine--N-acetylmuramyl-(pentapeptide) pyrophosphoryl-undecaprenol N-acetylglucosamine transferase</fullName>
        <ecNumber evidence="1">2.4.1.227</ecNumber>
    </recommendedName>
    <alternativeName>
        <fullName evidence="1">Undecaprenyl-PP-MurNAc-pentapeptide-UDPGlcNAc GlcNAc transferase</fullName>
    </alternativeName>
</protein>
<evidence type="ECO:0000255" key="1">
    <source>
        <dbReference type="HAMAP-Rule" id="MF_00033"/>
    </source>
</evidence>
<sequence>MSGQPKRLMVMAGGTGGHVFPGLAVAHHLMAQGWQVRWLGTADRMEADLVPKHGIDIDFIRISGLRGKGVKALLAAPLRIFNAWRQARAIMKRFKPDVVLGMGGYVSGPGGLAAWSLGIPVVLHEQNGIAGLTNQWLAKIATTVMQAFPGAFPNAEVVGNPVRTDVLALPLPQVRLAGRDGPIRVLVVGGSQGARVLNQTMPQVAARLGDTVTIWHQSGKGVQHTVEQAYAGVGQPQHKVTEFIDDMAAAYAWADVVVCRSGALTVSEIAAAGLPAIFVPFQHKDRQQYWNALPLENAGAAKIFEQPQFTVEAVADTLAGWSREALLTMAERARAVSIPDATERVASEVSRVART</sequence>
<reference key="1">
    <citation type="journal article" date="2008" name="Genome Res.">
        <title>Comparative genome analysis of Salmonella enteritidis PT4 and Salmonella gallinarum 287/91 provides insights into evolutionary and host adaptation pathways.</title>
        <authorList>
            <person name="Thomson N.R."/>
            <person name="Clayton D.J."/>
            <person name="Windhorst D."/>
            <person name="Vernikos G."/>
            <person name="Davidson S."/>
            <person name="Churcher C."/>
            <person name="Quail M.A."/>
            <person name="Stevens M."/>
            <person name="Jones M.A."/>
            <person name="Watson M."/>
            <person name="Barron A."/>
            <person name="Layton A."/>
            <person name="Pickard D."/>
            <person name="Kingsley R.A."/>
            <person name="Bignell A."/>
            <person name="Clark L."/>
            <person name="Harris B."/>
            <person name="Ormond D."/>
            <person name="Abdellah Z."/>
            <person name="Brooks K."/>
            <person name="Cherevach I."/>
            <person name="Chillingworth T."/>
            <person name="Woodward J."/>
            <person name="Norberczak H."/>
            <person name="Lord A."/>
            <person name="Arrowsmith C."/>
            <person name="Jagels K."/>
            <person name="Moule S."/>
            <person name="Mungall K."/>
            <person name="Saunders M."/>
            <person name="Whitehead S."/>
            <person name="Chabalgoity J.A."/>
            <person name="Maskell D."/>
            <person name="Humphreys T."/>
            <person name="Roberts M."/>
            <person name="Barrow P.A."/>
            <person name="Dougan G."/>
            <person name="Parkhill J."/>
        </authorList>
    </citation>
    <scope>NUCLEOTIDE SEQUENCE [LARGE SCALE GENOMIC DNA]</scope>
    <source>
        <strain>287/91 / NCTC 13346</strain>
    </source>
</reference>
<feature type="chain" id="PRO_1000090468" description="UDP-N-acetylglucosamine--N-acetylmuramyl-(pentapeptide) pyrophosphoryl-undecaprenol N-acetylglucosamine transferase">
    <location>
        <begin position="1"/>
        <end position="355"/>
    </location>
</feature>
<feature type="binding site" evidence="1">
    <location>
        <begin position="15"/>
        <end position="17"/>
    </location>
    <ligand>
        <name>UDP-N-acetyl-alpha-D-glucosamine</name>
        <dbReference type="ChEBI" id="CHEBI:57705"/>
    </ligand>
</feature>
<feature type="binding site" evidence="1">
    <location>
        <position position="127"/>
    </location>
    <ligand>
        <name>UDP-N-acetyl-alpha-D-glucosamine</name>
        <dbReference type="ChEBI" id="CHEBI:57705"/>
    </ligand>
</feature>
<feature type="binding site" evidence="1">
    <location>
        <position position="163"/>
    </location>
    <ligand>
        <name>UDP-N-acetyl-alpha-D-glucosamine</name>
        <dbReference type="ChEBI" id="CHEBI:57705"/>
    </ligand>
</feature>
<feature type="binding site" evidence="1">
    <location>
        <position position="191"/>
    </location>
    <ligand>
        <name>UDP-N-acetyl-alpha-D-glucosamine</name>
        <dbReference type="ChEBI" id="CHEBI:57705"/>
    </ligand>
</feature>
<feature type="binding site" evidence="1">
    <location>
        <position position="244"/>
    </location>
    <ligand>
        <name>UDP-N-acetyl-alpha-D-glucosamine</name>
        <dbReference type="ChEBI" id="CHEBI:57705"/>
    </ligand>
</feature>
<feature type="binding site" evidence="1">
    <location>
        <begin position="263"/>
        <end position="268"/>
    </location>
    <ligand>
        <name>UDP-N-acetyl-alpha-D-glucosamine</name>
        <dbReference type="ChEBI" id="CHEBI:57705"/>
    </ligand>
</feature>
<feature type="binding site" evidence="1">
    <location>
        <position position="288"/>
    </location>
    <ligand>
        <name>UDP-N-acetyl-alpha-D-glucosamine</name>
        <dbReference type="ChEBI" id="CHEBI:57705"/>
    </ligand>
</feature>
<organism>
    <name type="scientific">Salmonella gallinarum (strain 287/91 / NCTC 13346)</name>
    <dbReference type="NCBI Taxonomy" id="550538"/>
    <lineage>
        <taxon>Bacteria</taxon>
        <taxon>Pseudomonadati</taxon>
        <taxon>Pseudomonadota</taxon>
        <taxon>Gammaproteobacteria</taxon>
        <taxon>Enterobacterales</taxon>
        <taxon>Enterobacteriaceae</taxon>
        <taxon>Salmonella</taxon>
    </lineage>
</organism>
<proteinExistence type="inferred from homology"/>
<comment type="function">
    <text evidence="1">Cell wall formation. Catalyzes the transfer of a GlcNAc subunit on undecaprenyl-pyrophosphoryl-MurNAc-pentapeptide (lipid intermediate I) to form undecaprenyl-pyrophosphoryl-MurNAc-(pentapeptide)GlcNAc (lipid intermediate II).</text>
</comment>
<comment type="catalytic activity">
    <reaction evidence="1">
        <text>di-trans,octa-cis-undecaprenyl diphospho-N-acetyl-alpha-D-muramoyl-L-alanyl-D-glutamyl-meso-2,6-diaminopimeloyl-D-alanyl-D-alanine + UDP-N-acetyl-alpha-D-glucosamine = di-trans,octa-cis-undecaprenyl diphospho-[N-acetyl-alpha-D-glucosaminyl-(1-&gt;4)]-N-acetyl-alpha-D-muramoyl-L-alanyl-D-glutamyl-meso-2,6-diaminopimeloyl-D-alanyl-D-alanine + UDP + H(+)</text>
        <dbReference type="Rhea" id="RHEA:31227"/>
        <dbReference type="ChEBI" id="CHEBI:15378"/>
        <dbReference type="ChEBI" id="CHEBI:57705"/>
        <dbReference type="ChEBI" id="CHEBI:58223"/>
        <dbReference type="ChEBI" id="CHEBI:61387"/>
        <dbReference type="ChEBI" id="CHEBI:61388"/>
        <dbReference type="EC" id="2.4.1.227"/>
    </reaction>
</comment>
<comment type="pathway">
    <text evidence="1">Cell wall biogenesis; peptidoglycan biosynthesis.</text>
</comment>
<comment type="subcellular location">
    <subcellularLocation>
        <location evidence="1">Cell inner membrane</location>
        <topology evidence="1">Peripheral membrane protein</topology>
        <orientation evidence="1">Cytoplasmic side</orientation>
    </subcellularLocation>
</comment>
<comment type="similarity">
    <text evidence="1">Belongs to the glycosyltransferase 28 family. MurG subfamily.</text>
</comment>
<keyword id="KW-0131">Cell cycle</keyword>
<keyword id="KW-0132">Cell division</keyword>
<keyword id="KW-0997">Cell inner membrane</keyword>
<keyword id="KW-1003">Cell membrane</keyword>
<keyword id="KW-0133">Cell shape</keyword>
<keyword id="KW-0961">Cell wall biogenesis/degradation</keyword>
<keyword id="KW-0328">Glycosyltransferase</keyword>
<keyword id="KW-0472">Membrane</keyword>
<keyword id="KW-0573">Peptidoglycan synthesis</keyword>
<keyword id="KW-0808">Transferase</keyword>
<name>MURG_SALG2</name>
<dbReference type="EC" id="2.4.1.227" evidence="1"/>
<dbReference type="EMBL" id="AM933173">
    <property type="protein sequence ID" value="CAR36036.1"/>
    <property type="molecule type" value="Genomic_DNA"/>
</dbReference>
<dbReference type="RefSeq" id="WP_000016615.1">
    <property type="nucleotide sequence ID" value="NC_011274.1"/>
</dbReference>
<dbReference type="SMR" id="B5RH64"/>
<dbReference type="CAZy" id="GT28">
    <property type="family name" value="Glycosyltransferase Family 28"/>
</dbReference>
<dbReference type="KEGG" id="seg:SG0129"/>
<dbReference type="HOGENOM" id="CLU_037404_2_0_6"/>
<dbReference type="UniPathway" id="UPA00219"/>
<dbReference type="Proteomes" id="UP000008321">
    <property type="component" value="Chromosome"/>
</dbReference>
<dbReference type="GO" id="GO:0005886">
    <property type="term" value="C:plasma membrane"/>
    <property type="evidence" value="ECO:0007669"/>
    <property type="project" value="UniProtKB-SubCell"/>
</dbReference>
<dbReference type="GO" id="GO:0051991">
    <property type="term" value="F:UDP-N-acetyl-D-glucosamine:N-acetylmuramoyl-L-alanyl-D-glutamyl-meso-2,6-diaminopimelyl-D-alanyl-D-alanine-diphosphoundecaprenol 4-beta-N-acetylglucosaminlytransferase activity"/>
    <property type="evidence" value="ECO:0007669"/>
    <property type="project" value="RHEA"/>
</dbReference>
<dbReference type="GO" id="GO:0050511">
    <property type="term" value="F:undecaprenyldiphospho-muramoylpentapeptide beta-N-acetylglucosaminyltransferase activity"/>
    <property type="evidence" value="ECO:0007669"/>
    <property type="project" value="UniProtKB-UniRule"/>
</dbReference>
<dbReference type="GO" id="GO:0005975">
    <property type="term" value="P:carbohydrate metabolic process"/>
    <property type="evidence" value="ECO:0007669"/>
    <property type="project" value="InterPro"/>
</dbReference>
<dbReference type="GO" id="GO:0051301">
    <property type="term" value="P:cell division"/>
    <property type="evidence" value="ECO:0007669"/>
    <property type="project" value="UniProtKB-KW"/>
</dbReference>
<dbReference type="GO" id="GO:0071555">
    <property type="term" value="P:cell wall organization"/>
    <property type="evidence" value="ECO:0007669"/>
    <property type="project" value="UniProtKB-KW"/>
</dbReference>
<dbReference type="GO" id="GO:0030259">
    <property type="term" value="P:lipid glycosylation"/>
    <property type="evidence" value="ECO:0007669"/>
    <property type="project" value="UniProtKB-UniRule"/>
</dbReference>
<dbReference type="GO" id="GO:0009252">
    <property type="term" value="P:peptidoglycan biosynthetic process"/>
    <property type="evidence" value="ECO:0007669"/>
    <property type="project" value="UniProtKB-UniRule"/>
</dbReference>
<dbReference type="GO" id="GO:0008360">
    <property type="term" value="P:regulation of cell shape"/>
    <property type="evidence" value="ECO:0007669"/>
    <property type="project" value="UniProtKB-KW"/>
</dbReference>
<dbReference type="CDD" id="cd03785">
    <property type="entry name" value="GT28_MurG"/>
    <property type="match status" value="1"/>
</dbReference>
<dbReference type="FunFam" id="3.40.50.2000:FF:000016">
    <property type="entry name" value="UDP-N-acetylglucosamine--N-acetylmuramyl-(pentapeptide) pyrophosphoryl-undecaprenol N-acetylglucosamine transferase"/>
    <property type="match status" value="1"/>
</dbReference>
<dbReference type="FunFam" id="3.40.50.2000:FF:000018">
    <property type="entry name" value="UDP-N-acetylglucosamine--N-acetylmuramyl-(pentapeptide) pyrophosphoryl-undecaprenol N-acetylglucosamine transferase"/>
    <property type="match status" value="1"/>
</dbReference>
<dbReference type="Gene3D" id="3.40.50.2000">
    <property type="entry name" value="Glycogen Phosphorylase B"/>
    <property type="match status" value="2"/>
</dbReference>
<dbReference type="HAMAP" id="MF_00033">
    <property type="entry name" value="MurG"/>
    <property type="match status" value="1"/>
</dbReference>
<dbReference type="InterPro" id="IPR006009">
    <property type="entry name" value="GlcNAc_MurG"/>
</dbReference>
<dbReference type="InterPro" id="IPR007235">
    <property type="entry name" value="Glyco_trans_28_C"/>
</dbReference>
<dbReference type="InterPro" id="IPR004276">
    <property type="entry name" value="GlycoTrans_28_N"/>
</dbReference>
<dbReference type="NCBIfam" id="TIGR01133">
    <property type="entry name" value="murG"/>
    <property type="match status" value="1"/>
</dbReference>
<dbReference type="PANTHER" id="PTHR21015:SF22">
    <property type="entry name" value="GLYCOSYLTRANSFERASE"/>
    <property type="match status" value="1"/>
</dbReference>
<dbReference type="PANTHER" id="PTHR21015">
    <property type="entry name" value="UDP-N-ACETYLGLUCOSAMINE--N-ACETYLMURAMYL-(PENTAPEPTIDE) PYROPHOSPHORYL-UNDECAPRENOL N-ACETYLGLUCOSAMINE TRANSFERASE 1"/>
    <property type="match status" value="1"/>
</dbReference>
<dbReference type="Pfam" id="PF04101">
    <property type="entry name" value="Glyco_tran_28_C"/>
    <property type="match status" value="1"/>
</dbReference>
<dbReference type="Pfam" id="PF03033">
    <property type="entry name" value="Glyco_transf_28"/>
    <property type="match status" value="1"/>
</dbReference>
<dbReference type="SUPFAM" id="SSF53756">
    <property type="entry name" value="UDP-Glycosyltransferase/glycogen phosphorylase"/>
    <property type="match status" value="1"/>
</dbReference>
<accession>B5RH64</accession>
<gene>
    <name evidence="1" type="primary">murG</name>
    <name type="ordered locus">SG0129</name>
</gene>